<name>VM3AD_AGKCL</name>
<keyword id="KW-1204">Blood coagulation cascade activating toxin</keyword>
<keyword id="KW-0106">Calcium</keyword>
<keyword id="KW-1217">Cell adhesion impairing toxin</keyword>
<keyword id="KW-1015">Disulfide bond</keyword>
<keyword id="KW-0325">Glycoprotein</keyword>
<keyword id="KW-1199">Hemostasis impairing toxin</keyword>
<keyword id="KW-0378">Hydrolase</keyword>
<keyword id="KW-0479">Metal-binding</keyword>
<keyword id="KW-0482">Metalloprotease</keyword>
<keyword id="KW-1201">Platelet aggregation inhibiting toxin</keyword>
<keyword id="KW-0645">Protease</keyword>
<keyword id="KW-0655">Prothrombin activator</keyword>
<keyword id="KW-0964">Secreted</keyword>
<keyword id="KW-0732">Signal</keyword>
<keyword id="KW-0800">Toxin</keyword>
<keyword id="KW-0862">Zinc</keyword>
<keyword id="KW-0865">Zymogen</keyword>
<accession>O42138</accession>
<accession>C9E1R4</accession>
<comment type="function">
    <text evidence="1">Is a potent activator of prothrombin (F2). Does not elicit any hemorrhagic response. Barely inhibits collagen-induced platelet aggregation. Binds neither collagen, nor the jararhagin-monoclonal antibody MAJar3. Hydrolyzes the Aalpha-chain of fibrin and fibrinogen, without affecting the Bbeta- and gamma-chains. Is capable of triggering endothelial pro-inflammatory and procoagulant cell responses, but fails to trigger apoptosis. Induces von Willebrand factor release, and the expression of both ICAM1 and E-selectin (SELE) (without increase in VCAM1) in endothelial cells (HUVEC). Is also able to up-regulate the synthesis of the coagulation factor TF (F3). Enhances nitric oxide (NO) generation, prostacyclin production and interleukin-8 release (By similarity).</text>
</comment>
<comment type="cofactor">
    <cofactor evidence="1">
        <name>Zn(2+)</name>
        <dbReference type="ChEBI" id="CHEBI:29105"/>
    </cofactor>
    <text evidence="1">Binds 1 zinc ion per subunit.</text>
</comment>
<comment type="activity regulation">
    <text evidence="1">Inhibited by EDTA and O-phenanthroline. Not inhibited by PMSF, benzamidine, irreversible serine-proteinase inhibitors and cysteine proteinase inhibitor E-64 (By similarity).</text>
</comment>
<comment type="subunit">
    <text evidence="1">Monomer.</text>
</comment>
<comment type="subcellular location">
    <subcellularLocation>
        <location evidence="1">Secreted</location>
    </subcellularLocation>
</comment>
<comment type="tissue specificity">
    <text>Expressed by the venom gland.</text>
</comment>
<comment type="similarity">
    <text evidence="6">Belongs to the venom metalloproteinase (M12B) family. P-III subfamily. P-IIIa sub-subfamily.</text>
</comment>
<proteinExistence type="evidence at transcript level"/>
<protein>
    <recommendedName>
        <fullName>Zinc metalloproteinase-disintegrin-like ACLD</fullName>
        <ecNumber>3.4.24.-</ecNumber>
    </recommendedName>
    <alternativeName>
        <fullName>Snake venom metalloproteinase</fullName>
        <shortName>SVMP</shortName>
    </alternativeName>
    <alternativeName>
        <fullName>VMP-III</fullName>
        <shortName>AclVMP-III</shortName>
    </alternativeName>
</protein>
<reference key="1">
    <citation type="journal article" date="1997" name="Biochim. Biophys. Acta">
        <title>Analysis of a cDNA sequence encoding a novel member of the snake venom metalloproteinase, disintegrin-like, cysteine-rich (MDC) protein family from Agkistrodon contortrix laticinctus.</title>
        <authorList>
            <person name="Selistre de Araujo H.S."/>
            <person name="de Souza D.H.F."/>
            <person name="Ownby C.L."/>
        </authorList>
    </citation>
    <scope>NUCLEOTIDE SEQUENCE [MRNA]</scope>
    <source>
        <tissue>Venom gland</tissue>
    </source>
</reference>
<reference key="2">
    <citation type="journal article" date="2010" name="Toxicon">
        <title>Molecular cloning and characterization of cDNAs encoding metalloproteinases from snake venom glands.</title>
        <authorList>
            <person name="Jia Y."/>
            <person name="Perez J.C."/>
        </authorList>
    </citation>
    <scope>NUCLEOTIDE SEQUENCE [MRNA]</scope>
    <source>
        <tissue>Venom gland</tissue>
    </source>
</reference>
<evidence type="ECO:0000250" key="1"/>
<evidence type="ECO:0000255" key="2"/>
<evidence type="ECO:0000255" key="3">
    <source>
        <dbReference type="PROSITE-ProRule" id="PRU00068"/>
    </source>
</evidence>
<evidence type="ECO:0000255" key="4">
    <source>
        <dbReference type="PROSITE-ProRule" id="PRU00276"/>
    </source>
</evidence>
<evidence type="ECO:0000255" key="5">
    <source>
        <dbReference type="PROSITE-ProRule" id="PRU10095"/>
    </source>
</evidence>
<evidence type="ECO:0000305" key="6"/>
<dbReference type="EC" id="3.4.24.-"/>
<dbReference type="EMBL" id="U86634">
    <property type="protein sequence ID" value="AAC18911.1"/>
    <property type="molecule type" value="mRNA"/>
</dbReference>
<dbReference type="EMBL" id="GQ451435">
    <property type="protein sequence ID" value="ACV83929.1"/>
    <property type="molecule type" value="mRNA"/>
</dbReference>
<dbReference type="SMR" id="O42138"/>
<dbReference type="MEROPS" id="M12.142"/>
<dbReference type="GO" id="GO:0005576">
    <property type="term" value="C:extracellular region"/>
    <property type="evidence" value="ECO:0007669"/>
    <property type="project" value="UniProtKB-SubCell"/>
</dbReference>
<dbReference type="GO" id="GO:0005886">
    <property type="term" value="C:plasma membrane"/>
    <property type="evidence" value="ECO:0007669"/>
    <property type="project" value="TreeGrafter"/>
</dbReference>
<dbReference type="GO" id="GO:0046872">
    <property type="term" value="F:metal ion binding"/>
    <property type="evidence" value="ECO:0007669"/>
    <property type="project" value="UniProtKB-KW"/>
</dbReference>
<dbReference type="GO" id="GO:0004222">
    <property type="term" value="F:metalloendopeptidase activity"/>
    <property type="evidence" value="ECO:0007669"/>
    <property type="project" value="InterPro"/>
</dbReference>
<dbReference type="GO" id="GO:0016504">
    <property type="term" value="F:peptidase activator activity"/>
    <property type="evidence" value="ECO:0007669"/>
    <property type="project" value="UniProtKB-KW"/>
</dbReference>
<dbReference type="GO" id="GO:0090729">
    <property type="term" value="F:toxin activity"/>
    <property type="evidence" value="ECO:0007669"/>
    <property type="project" value="UniProtKB-KW"/>
</dbReference>
<dbReference type="GO" id="GO:0006508">
    <property type="term" value="P:proteolysis"/>
    <property type="evidence" value="ECO:0007669"/>
    <property type="project" value="UniProtKB-KW"/>
</dbReference>
<dbReference type="CDD" id="cd04269">
    <property type="entry name" value="ZnMc_adamalysin_II_like"/>
    <property type="match status" value="1"/>
</dbReference>
<dbReference type="FunFam" id="3.40.390.10:FF:000002">
    <property type="entry name" value="Disintegrin and metalloproteinase domain-containing protein 22"/>
    <property type="match status" value="1"/>
</dbReference>
<dbReference type="FunFam" id="4.10.70.10:FF:000001">
    <property type="entry name" value="Disintegrin and metalloproteinase domain-containing protein 22"/>
    <property type="match status" value="1"/>
</dbReference>
<dbReference type="Gene3D" id="3.40.390.10">
    <property type="entry name" value="Collagenase (Catalytic Domain)"/>
    <property type="match status" value="1"/>
</dbReference>
<dbReference type="Gene3D" id="4.10.70.10">
    <property type="entry name" value="Disintegrin domain"/>
    <property type="match status" value="1"/>
</dbReference>
<dbReference type="InterPro" id="IPR006586">
    <property type="entry name" value="ADAM_Cys-rich"/>
</dbReference>
<dbReference type="InterPro" id="IPR018358">
    <property type="entry name" value="Disintegrin_CS"/>
</dbReference>
<dbReference type="InterPro" id="IPR001762">
    <property type="entry name" value="Disintegrin_dom"/>
</dbReference>
<dbReference type="InterPro" id="IPR036436">
    <property type="entry name" value="Disintegrin_dom_sf"/>
</dbReference>
<dbReference type="InterPro" id="IPR024079">
    <property type="entry name" value="MetalloPept_cat_dom_sf"/>
</dbReference>
<dbReference type="InterPro" id="IPR001590">
    <property type="entry name" value="Peptidase_M12B"/>
</dbReference>
<dbReference type="InterPro" id="IPR002870">
    <property type="entry name" value="Peptidase_M12B_N"/>
</dbReference>
<dbReference type="InterPro" id="IPR034027">
    <property type="entry name" value="Reprolysin_adamalysin"/>
</dbReference>
<dbReference type="PANTHER" id="PTHR11905">
    <property type="entry name" value="ADAM A DISINTEGRIN AND METALLOPROTEASE DOMAIN"/>
    <property type="match status" value="1"/>
</dbReference>
<dbReference type="PANTHER" id="PTHR11905:SF32">
    <property type="entry name" value="DISINTEGRIN AND METALLOPROTEINASE DOMAIN-CONTAINING PROTEIN 28"/>
    <property type="match status" value="1"/>
</dbReference>
<dbReference type="Pfam" id="PF08516">
    <property type="entry name" value="ADAM_CR"/>
    <property type="match status" value="1"/>
</dbReference>
<dbReference type="Pfam" id="PF00200">
    <property type="entry name" value="Disintegrin"/>
    <property type="match status" value="1"/>
</dbReference>
<dbReference type="Pfam" id="PF01562">
    <property type="entry name" value="Pep_M12B_propep"/>
    <property type="match status" value="1"/>
</dbReference>
<dbReference type="Pfam" id="PF01421">
    <property type="entry name" value="Reprolysin"/>
    <property type="match status" value="1"/>
</dbReference>
<dbReference type="PRINTS" id="PR00289">
    <property type="entry name" value="DISINTEGRIN"/>
</dbReference>
<dbReference type="SMART" id="SM00608">
    <property type="entry name" value="ACR"/>
    <property type="match status" value="1"/>
</dbReference>
<dbReference type="SMART" id="SM00050">
    <property type="entry name" value="DISIN"/>
    <property type="match status" value="1"/>
</dbReference>
<dbReference type="SUPFAM" id="SSF57552">
    <property type="entry name" value="Blood coagulation inhibitor (disintegrin)"/>
    <property type="match status" value="1"/>
</dbReference>
<dbReference type="SUPFAM" id="SSF55486">
    <property type="entry name" value="Metalloproteases ('zincins'), catalytic domain"/>
    <property type="match status" value="1"/>
</dbReference>
<dbReference type="PROSITE" id="PS50215">
    <property type="entry name" value="ADAM_MEPRO"/>
    <property type="match status" value="1"/>
</dbReference>
<dbReference type="PROSITE" id="PS00427">
    <property type="entry name" value="DISINTEGRIN_1"/>
    <property type="match status" value="1"/>
</dbReference>
<dbReference type="PROSITE" id="PS50214">
    <property type="entry name" value="DISINTEGRIN_2"/>
    <property type="match status" value="1"/>
</dbReference>
<dbReference type="PROSITE" id="PS00142">
    <property type="entry name" value="ZINC_PROTEASE"/>
    <property type="match status" value="1"/>
</dbReference>
<feature type="signal peptide" evidence="2">
    <location>
        <begin position="1"/>
        <end position="20"/>
    </location>
</feature>
<feature type="propeptide" id="PRO_0000326416" evidence="1">
    <location>
        <begin position="21"/>
        <end position="189"/>
    </location>
</feature>
<feature type="chain" id="PRO_0000326417" description="Zinc metalloproteinase-disintegrin-like ACLD">
    <location>
        <begin position="190"/>
        <end position="620"/>
    </location>
</feature>
<feature type="domain" description="Peptidase M12B" evidence="4">
    <location>
        <begin position="199"/>
        <end position="395"/>
    </location>
</feature>
<feature type="domain" description="Disintegrin" evidence="3">
    <location>
        <begin position="403"/>
        <end position="489"/>
    </location>
</feature>
<feature type="short sequence motif" description="D/ECD-tripeptide">
    <location>
        <begin position="467"/>
        <end position="469"/>
    </location>
</feature>
<feature type="active site" evidence="4 5">
    <location>
        <position position="336"/>
    </location>
</feature>
<feature type="binding site" evidence="1">
    <location>
        <position position="202"/>
    </location>
    <ligand>
        <name>Ca(2+)</name>
        <dbReference type="ChEBI" id="CHEBI:29108"/>
        <label>1</label>
    </ligand>
</feature>
<feature type="binding site" evidence="1">
    <location>
        <position position="286"/>
    </location>
    <ligand>
        <name>Ca(2+)</name>
        <dbReference type="ChEBI" id="CHEBI:29108"/>
        <label>1</label>
    </ligand>
</feature>
<feature type="binding site" evidence="1">
    <location>
        <position position="335"/>
    </location>
    <ligand>
        <name>Zn(2+)</name>
        <dbReference type="ChEBI" id="CHEBI:29105"/>
        <note>catalytic</note>
    </ligand>
</feature>
<feature type="binding site" evidence="1">
    <location>
        <position position="339"/>
    </location>
    <ligand>
        <name>Zn(2+)</name>
        <dbReference type="ChEBI" id="CHEBI:29105"/>
        <note>catalytic</note>
    </ligand>
</feature>
<feature type="binding site" evidence="1">
    <location>
        <position position="345"/>
    </location>
    <ligand>
        <name>Zn(2+)</name>
        <dbReference type="ChEBI" id="CHEBI:29105"/>
        <note>catalytic</note>
    </ligand>
</feature>
<feature type="binding site" evidence="1">
    <location>
        <position position="390"/>
    </location>
    <ligand>
        <name>Ca(2+)</name>
        <dbReference type="ChEBI" id="CHEBI:29108"/>
        <label>1</label>
    </ligand>
</feature>
<feature type="binding site" evidence="1">
    <location>
        <position position="393"/>
    </location>
    <ligand>
        <name>Ca(2+)</name>
        <dbReference type="ChEBI" id="CHEBI:29108"/>
        <label>1</label>
    </ligand>
</feature>
<feature type="binding site" evidence="1">
    <location>
        <position position="405"/>
    </location>
    <ligand>
        <name>Ca(2+)</name>
        <dbReference type="ChEBI" id="CHEBI:29108"/>
        <label>2</label>
    </ligand>
</feature>
<feature type="binding site" evidence="1">
    <location>
        <position position="408"/>
    </location>
    <ligand>
        <name>Ca(2+)</name>
        <dbReference type="ChEBI" id="CHEBI:29108"/>
        <label>2</label>
    </ligand>
</feature>
<feature type="binding site" evidence="1">
    <location>
        <position position="410"/>
    </location>
    <ligand>
        <name>Ca(2+)</name>
        <dbReference type="ChEBI" id="CHEBI:29108"/>
        <label>2</label>
    </ligand>
</feature>
<feature type="binding site" evidence="1">
    <location>
        <position position="412"/>
    </location>
    <ligand>
        <name>Ca(2+)</name>
        <dbReference type="ChEBI" id="CHEBI:29108"/>
        <label>2</label>
    </ligand>
</feature>
<feature type="binding site" evidence="1">
    <location>
        <position position="415"/>
    </location>
    <ligand>
        <name>Ca(2+)</name>
        <dbReference type="ChEBI" id="CHEBI:29108"/>
        <label>2</label>
    </ligand>
</feature>
<feature type="binding site" evidence="1">
    <location>
        <position position="418"/>
    </location>
    <ligand>
        <name>Ca(2+)</name>
        <dbReference type="ChEBI" id="CHEBI:29108"/>
        <label>2</label>
    </ligand>
</feature>
<feature type="glycosylation site" description="N-linked (GlcNAc...) asparagine" evidence="2">
    <location>
        <position position="259"/>
    </location>
</feature>
<feature type="glycosylation site" description="N-linked (GlcNAc...) asparagine" evidence="2">
    <location>
        <position position="265"/>
    </location>
</feature>
<feature type="glycosylation site" description="N-linked (GlcNAc...) asparagine" evidence="2">
    <location>
        <position position="373"/>
    </location>
</feature>
<feature type="glycosylation site" description="N-linked (GlcNAc...) asparagine" evidence="2">
    <location>
        <position position="396"/>
    </location>
</feature>
<feature type="glycosylation site" description="N-linked (GlcNAc...) asparagine" evidence="2">
    <location>
        <position position="502"/>
    </location>
</feature>
<feature type="glycosylation site" description="N-linked (GlcNAc...) asparagine" evidence="2">
    <location>
        <position position="536"/>
    </location>
</feature>
<feature type="disulfide bond" evidence="1">
    <location>
        <begin position="310"/>
        <end position="390"/>
    </location>
</feature>
<feature type="disulfide bond" evidence="1">
    <location>
        <begin position="350"/>
        <end position="374"/>
    </location>
</feature>
<feature type="disulfide bond" evidence="1">
    <location>
        <begin position="352"/>
        <end position="357"/>
    </location>
</feature>
<feature type="disulfide bond" evidence="1">
    <location>
        <begin position="406"/>
        <end position="435"/>
    </location>
</feature>
<feature type="disulfide bond" evidence="1">
    <location>
        <begin position="417"/>
        <end position="430"/>
    </location>
</feature>
<feature type="disulfide bond" evidence="1">
    <location>
        <begin position="419"/>
        <end position="425"/>
    </location>
</feature>
<feature type="disulfide bond" evidence="1">
    <location>
        <begin position="429"/>
        <end position="452"/>
    </location>
</feature>
<feature type="disulfide bond" evidence="1">
    <location>
        <begin position="443"/>
        <end position="449"/>
    </location>
</feature>
<feature type="disulfide bond" evidence="1">
    <location>
        <begin position="448"/>
        <end position="474"/>
    </location>
</feature>
<feature type="disulfide bond" evidence="1">
    <location>
        <begin position="461"/>
        <end position="481"/>
    </location>
</feature>
<feature type="disulfide bond" evidence="1">
    <location>
        <begin position="468"/>
        <end position="500"/>
    </location>
</feature>
<feature type="disulfide bond" evidence="1">
    <location>
        <begin position="493"/>
        <end position="505"/>
    </location>
</feature>
<feature type="disulfide bond" evidence="1">
    <location>
        <begin position="512"/>
        <end position="562"/>
    </location>
</feature>
<feature type="disulfide bond" evidence="1">
    <location>
        <begin position="527"/>
        <end position="573"/>
    </location>
</feature>
<feature type="disulfide bond" evidence="1">
    <location>
        <begin position="540"/>
        <end position="550"/>
    </location>
</feature>
<feature type="disulfide bond" evidence="1">
    <location>
        <begin position="557"/>
        <end position="599"/>
    </location>
</feature>
<feature type="disulfide bond" evidence="1">
    <location>
        <begin position="593"/>
        <end position="604"/>
    </location>
</feature>
<feature type="sequence conflict" description="In Ref. 2; ACV83929." evidence="6" ref="2">
    <original>Y</original>
    <variation>H</variation>
    <location>
        <position position="96"/>
    </location>
</feature>
<feature type="sequence conflict" description="In Ref. 2; ACV83929." evidence="6" ref="2">
    <original>D</original>
    <variation>E</variation>
    <location>
        <position position="139"/>
    </location>
</feature>
<feature type="sequence conflict" description="In Ref. 2; ACV83929." evidence="6" ref="2">
    <original>S</original>
    <variation>L</variation>
    <location>
        <position position="268"/>
    </location>
</feature>
<feature type="sequence conflict" description="In Ref. 2; ACV83929." evidence="6" ref="2">
    <original>M</original>
    <variation>K</variation>
    <location>
        <position position="306"/>
    </location>
</feature>
<feature type="sequence conflict" description="In Ref. 2; ACV83929." evidence="6" ref="2">
    <original>Q</original>
    <variation>A</variation>
    <location>
        <position position="463"/>
    </location>
</feature>
<organism>
    <name type="scientific">Agkistrodon contortrix laticinctus</name>
    <name type="common">Broad-banded copperhead</name>
    <name type="synonym">Agkistrodon mokasen laticinctus</name>
    <dbReference type="NCBI Taxonomy" id="2782196"/>
    <lineage>
        <taxon>Eukaryota</taxon>
        <taxon>Metazoa</taxon>
        <taxon>Chordata</taxon>
        <taxon>Craniata</taxon>
        <taxon>Vertebrata</taxon>
        <taxon>Euteleostomi</taxon>
        <taxon>Lepidosauria</taxon>
        <taxon>Squamata</taxon>
        <taxon>Bifurcata</taxon>
        <taxon>Unidentata</taxon>
        <taxon>Episquamata</taxon>
        <taxon>Toxicofera</taxon>
        <taxon>Serpentes</taxon>
        <taxon>Colubroidea</taxon>
        <taxon>Viperidae</taxon>
        <taxon>Crotalinae</taxon>
        <taxon>Agkistrodon</taxon>
    </lineage>
</organism>
<sequence>MIQVLLVTLCLAVFPYQGSSIILESGNVNDYEVVYPRKVTVLPKGAVQPKYEDAMQYEFKVNGEPVVLHLEKNKQLFSKDYSETHYSPDGREITTYPLVEDHCYYHGRIENDADSTASISACNGLKGHFKLQGEMYLIDPLKLPDSEAHAVFKYENVEKEDEAPKMCGVTQNWESYEPIKKASQLNLTPEQQAYLDAKKYVEFVVVLDHGMYTKYKDNLDKIKTRIFEIVNTMNEMFIPLNIRVALICLEIWSDKDKFNMTSAANVTSISFRNWRATDLLKRKSHDNAQLLTVIDFDGPTIGKAYMASMCDPKRSVGIIQDHSTINLMMAVTMAHEMGHNLGMDHDEKYCTCGAKSCVMAKALSRQPSKLFSNCSQEDYRKYLIKRRPKCILNEPNGTDIVSPPVCGNELLEVGEECDCGSPTNCQNPCCDAATCKLTPGSQCADGVCCDQCRFTRAGTECRQAKDDCDMADLCTGQSAECPTDRFQRNGHPCLNDNGYCYNRTCPTLKNQCIYFFGPNAAVAKDSCFKGNQKSNNHTYCRKENGKKIPCAPQDIKCGRLYCFRNLPGKKNICSVIYTPTDEDIGMVLPGTKCEDGKVCSNGHCVDVNIAYKSTTGFSQI</sequence>